<feature type="initiator methionine" description="Removed" evidence="1">
    <location>
        <position position="1"/>
    </location>
</feature>
<feature type="chain" id="PRO_0000154629" description="Large ribosomal subunit protein uL10">
    <location>
        <begin position="2"/>
        <end position="165"/>
    </location>
</feature>
<feature type="modified residue" description="N6-acetyllysine" evidence="1">
    <location>
        <position position="37"/>
    </location>
</feature>
<feature type="modified residue" description="N6-acetyllysine" evidence="1">
    <location>
        <position position="105"/>
    </location>
</feature>
<name>RL10_ECOL6</name>
<reference key="1">
    <citation type="journal article" date="2002" name="Proc. Natl. Acad. Sci. U.S.A.">
        <title>Extensive mosaic structure revealed by the complete genome sequence of uropathogenic Escherichia coli.</title>
        <authorList>
            <person name="Welch R.A."/>
            <person name="Burland V."/>
            <person name="Plunkett G. III"/>
            <person name="Redford P."/>
            <person name="Roesch P."/>
            <person name="Rasko D."/>
            <person name="Buckles E.L."/>
            <person name="Liou S.-R."/>
            <person name="Boutin A."/>
            <person name="Hackett J."/>
            <person name="Stroud D."/>
            <person name="Mayhew G.F."/>
            <person name="Rose D.J."/>
            <person name="Zhou S."/>
            <person name="Schwartz D.C."/>
            <person name="Perna N.T."/>
            <person name="Mobley H.L.T."/>
            <person name="Donnenberg M.S."/>
            <person name="Blattner F.R."/>
        </authorList>
    </citation>
    <scope>NUCLEOTIDE SEQUENCE [LARGE SCALE GENOMIC DNA]</scope>
    <source>
        <strain>CFT073 / ATCC 700928 / UPEC</strain>
    </source>
</reference>
<comment type="function">
    <text evidence="1">Protein L10 is also a translational repressor protein. It controls the translation of the rplJL-rpoBC operon by binding to its mRNA (By similarity).</text>
</comment>
<comment type="function">
    <text evidence="1">Forms part of the ribosomal stalk, playing a central role in the interaction of the ribosome with GTP-bound translation factors.</text>
</comment>
<comment type="subunit">
    <text evidence="1">Part of the ribosomal stalk of the 50S ribosomal subunit. The N-terminus interacts with L11 and the large rRNA to form the base of the stalk. The C-terminus forms an elongated spine to which L12 dimers bind in a sequential fashion forming a multimeric L10(L12)X complex (By similarity).</text>
</comment>
<comment type="miscellaneous">
    <text evidence="1">Ribosomal protein L8 appears to be an aggregate of ribosomal proteins L7/L12 and L10.</text>
</comment>
<comment type="similarity">
    <text evidence="2">Belongs to the universal ribosomal protein uL10 family.</text>
</comment>
<gene>
    <name type="primary">rplJ</name>
    <name type="ordered locus">c4941</name>
</gene>
<dbReference type="EMBL" id="AE014075">
    <property type="protein sequence ID" value="AAN83369.1"/>
    <property type="molecule type" value="Genomic_DNA"/>
</dbReference>
<dbReference type="RefSeq" id="WP_001207201.1">
    <property type="nucleotide sequence ID" value="NZ_CP051263.1"/>
</dbReference>
<dbReference type="SMR" id="P0A7J4"/>
<dbReference type="STRING" id="199310.c4941"/>
<dbReference type="GeneID" id="93777909"/>
<dbReference type="KEGG" id="ecc:c4941"/>
<dbReference type="eggNOG" id="COG0244">
    <property type="taxonomic scope" value="Bacteria"/>
</dbReference>
<dbReference type="HOGENOM" id="CLU_092227_0_2_6"/>
<dbReference type="BioCyc" id="ECOL199310:C4941-MONOMER"/>
<dbReference type="Proteomes" id="UP000001410">
    <property type="component" value="Chromosome"/>
</dbReference>
<dbReference type="GO" id="GO:0015934">
    <property type="term" value="C:large ribosomal subunit"/>
    <property type="evidence" value="ECO:0007669"/>
    <property type="project" value="InterPro"/>
</dbReference>
<dbReference type="GO" id="GO:0070180">
    <property type="term" value="F:large ribosomal subunit rRNA binding"/>
    <property type="evidence" value="ECO:0007669"/>
    <property type="project" value="UniProtKB-UniRule"/>
</dbReference>
<dbReference type="GO" id="GO:0003735">
    <property type="term" value="F:structural constituent of ribosome"/>
    <property type="evidence" value="ECO:0007669"/>
    <property type="project" value="InterPro"/>
</dbReference>
<dbReference type="GO" id="GO:0006417">
    <property type="term" value="P:regulation of translation"/>
    <property type="evidence" value="ECO:0007669"/>
    <property type="project" value="UniProtKB-KW"/>
</dbReference>
<dbReference type="GO" id="GO:0006412">
    <property type="term" value="P:translation"/>
    <property type="evidence" value="ECO:0007669"/>
    <property type="project" value="UniProtKB-UniRule"/>
</dbReference>
<dbReference type="CDD" id="cd05797">
    <property type="entry name" value="Ribosomal_L10"/>
    <property type="match status" value="1"/>
</dbReference>
<dbReference type="FunFam" id="3.30.70.1730:FF:000001">
    <property type="entry name" value="50S ribosomal protein L10"/>
    <property type="match status" value="1"/>
</dbReference>
<dbReference type="Gene3D" id="3.30.70.1730">
    <property type="match status" value="1"/>
</dbReference>
<dbReference type="Gene3D" id="6.10.250.2350">
    <property type="match status" value="1"/>
</dbReference>
<dbReference type="HAMAP" id="MF_00362">
    <property type="entry name" value="Ribosomal_uL10"/>
    <property type="match status" value="1"/>
</dbReference>
<dbReference type="InterPro" id="IPR001790">
    <property type="entry name" value="Ribosomal_uL10"/>
</dbReference>
<dbReference type="InterPro" id="IPR043141">
    <property type="entry name" value="Ribosomal_uL10-like_sf"/>
</dbReference>
<dbReference type="InterPro" id="IPR022973">
    <property type="entry name" value="Ribosomal_uL10_bac"/>
</dbReference>
<dbReference type="InterPro" id="IPR047865">
    <property type="entry name" value="Ribosomal_uL10_bac_type"/>
</dbReference>
<dbReference type="InterPro" id="IPR002363">
    <property type="entry name" value="Ribosomal_uL10_CS_bac"/>
</dbReference>
<dbReference type="NCBIfam" id="NF000955">
    <property type="entry name" value="PRK00099.1-1"/>
    <property type="match status" value="1"/>
</dbReference>
<dbReference type="PANTHER" id="PTHR11560">
    <property type="entry name" value="39S RIBOSOMAL PROTEIN L10, MITOCHONDRIAL"/>
    <property type="match status" value="1"/>
</dbReference>
<dbReference type="Pfam" id="PF00466">
    <property type="entry name" value="Ribosomal_L10"/>
    <property type="match status" value="1"/>
</dbReference>
<dbReference type="SUPFAM" id="SSF160369">
    <property type="entry name" value="Ribosomal protein L10-like"/>
    <property type="match status" value="1"/>
</dbReference>
<dbReference type="PROSITE" id="PS01109">
    <property type="entry name" value="RIBOSOMAL_L10"/>
    <property type="match status" value="1"/>
</dbReference>
<organism>
    <name type="scientific">Escherichia coli O6:H1 (strain CFT073 / ATCC 700928 / UPEC)</name>
    <dbReference type="NCBI Taxonomy" id="199310"/>
    <lineage>
        <taxon>Bacteria</taxon>
        <taxon>Pseudomonadati</taxon>
        <taxon>Pseudomonadota</taxon>
        <taxon>Gammaproteobacteria</taxon>
        <taxon>Enterobacterales</taxon>
        <taxon>Enterobacteriaceae</taxon>
        <taxon>Escherichia</taxon>
    </lineage>
</organism>
<keyword id="KW-0007">Acetylation</keyword>
<keyword id="KW-1185">Reference proteome</keyword>
<keyword id="KW-0678">Repressor</keyword>
<keyword id="KW-0687">Ribonucleoprotein</keyword>
<keyword id="KW-0689">Ribosomal protein</keyword>
<keyword id="KW-0694">RNA-binding</keyword>
<keyword id="KW-0699">rRNA-binding</keyword>
<keyword id="KW-0810">Translation regulation</keyword>
<protein>
    <recommendedName>
        <fullName evidence="2">Large ribosomal subunit protein uL10</fullName>
    </recommendedName>
    <alternativeName>
        <fullName>50S ribosomal protein L10</fullName>
    </alternativeName>
</protein>
<accession>P0A7J4</accession>
<accession>P02408</accession>
<evidence type="ECO:0000250" key="1"/>
<evidence type="ECO:0000305" key="2"/>
<sequence length="165" mass="17712">MALNLQDKQAIVAEVSEVAKGALSAVVADSRGVTVDKMTELRKAGREAGVYMRVVRNTLLRRAVEGTPFECLKDAFVGPTLIAYSMEHPGAAARLFKEFAKANAKFEVKAAAFEGELIPASQIDRLATLPTYEEAIARLMATMKEASAGKLVRTLAAVRDAKEAA</sequence>
<proteinExistence type="inferred from homology"/>